<dbReference type="EMBL" id="CP000359">
    <property type="protein sequence ID" value="ABF46151.1"/>
    <property type="molecule type" value="Genomic_DNA"/>
</dbReference>
<dbReference type="RefSeq" id="WP_011530981.1">
    <property type="nucleotide sequence ID" value="NC_008025.1"/>
</dbReference>
<dbReference type="SMR" id="Q1IX83"/>
<dbReference type="STRING" id="319795.Dgeo_1856"/>
<dbReference type="KEGG" id="dge:Dgeo_1856"/>
<dbReference type="eggNOG" id="COG0198">
    <property type="taxonomic scope" value="Bacteria"/>
</dbReference>
<dbReference type="HOGENOM" id="CLU_093315_2_0_0"/>
<dbReference type="Proteomes" id="UP000002431">
    <property type="component" value="Chromosome"/>
</dbReference>
<dbReference type="GO" id="GO:1990904">
    <property type="term" value="C:ribonucleoprotein complex"/>
    <property type="evidence" value="ECO:0007669"/>
    <property type="project" value="UniProtKB-KW"/>
</dbReference>
<dbReference type="GO" id="GO:0005840">
    <property type="term" value="C:ribosome"/>
    <property type="evidence" value="ECO:0007669"/>
    <property type="project" value="UniProtKB-KW"/>
</dbReference>
<dbReference type="GO" id="GO:0019843">
    <property type="term" value="F:rRNA binding"/>
    <property type="evidence" value="ECO:0007669"/>
    <property type="project" value="UniProtKB-UniRule"/>
</dbReference>
<dbReference type="GO" id="GO:0003735">
    <property type="term" value="F:structural constituent of ribosome"/>
    <property type="evidence" value="ECO:0007669"/>
    <property type="project" value="InterPro"/>
</dbReference>
<dbReference type="GO" id="GO:0006412">
    <property type="term" value="P:translation"/>
    <property type="evidence" value="ECO:0007669"/>
    <property type="project" value="UniProtKB-UniRule"/>
</dbReference>
<dbReference type="CDD" id="cd06089">
    <property type="entry name" value="KOW_RPL26"/>
    <property type="match status" value="1"/>
</dbReference>
<dbReference type="Gene3D" id="2.30.30.30">
    <property type="match status" value="1"/>
</dbReference>
<dbReference type="HAMAP" id="MF_01326_B">
    <property type="entry name" value="Ribosomal_uL24_B"/>
    <property type="match status" value="1"/>
</dbReference>
<dbReference type="InterPro" id="IPR005824">
    <property type="entry name" value="KOW"/>
</dbReference>
<dbReference type="InterPro" id="IPR014722">
    <property type="entry name" value="Rib_uL2_dom2"/>
</dbReference>
<dbReference type="InterPro" id="IPR003256">
    <property type="entry name" value="Ribosomal_uL24"/>
</dbReference>
<dbReference type="InterPro" id="IPR005825">
    <property type="entry name" value="Ribosomal_uL24_CS"/>
</dbReference>
<dbReference type="InterPro" id="IPR041988">
    <property type="entry name" value="Ribosomal_uL24_KOW"/>
</dbReference>
<dbReference type="InterPro" id="IPR008991">
    <property type="entry name" value="Translation_prot_SH3-like_sf"/>
</dbReference>
<dbReference type="NCBIfam" id="TIGR01079">
    <property type="entry name" value="rplX_bact"/>
    <property type="match status" value="1"/>
</dbReference>
<dbReference type="PANTHER" id="PTHR12903">
    <property type="entry name" value="MITOCHONDRIAL RIBOSOMAL PROTEIN L24"/>
    <property type="match status" value="1"/>
</dbReference>
<dbReference type="Pfam" id="PF00467">
    <property type="entry name" value="KOW"/>
    <property type="match status" value="1"/>
</dbReference>
<dbReference type="Pfam" id="PF17136">
    <property type="entry name" value="ribosomal_L24"/>
    <property type="match status" value="1"/>
</dbReference>
<dbReference type="SMART" id="SM00739">
    <property type="entry name" value="KOW"/>
    <property type="match status" value="1"/>
</dbReference>
<dbReference type="SUPFAM" id="SSF50104">
    <property type="entry name" value="Translation proteins SH3-like domain"/>
    <property type="match status" value="1"/>
</dbReference>
<dbReference type="PROSITE" id="PS01108">
    <property type="entry name" value="RIBOSOMAL_L24"/>
    <property type="match status" value="1"/>
</dbReference>
<feature type="chain" id="PRO_1000073259" description="Large ribosomal subunit protein uL24">
    <location>
        <begin position="1"/>
        <end position="115"/>
    </location>
</feature>
<reference key="1">
    <citation type="submission" date="2006-04" db="EMBL/GenBank/DDBJ databases">
        <title>Complete sequence of chromosome of Deinococcus geothermalis DSM 11300.</title>
        <authorList>
            <person name="Copeland A."/>
            <person name="Lucas S."/>
            <person name="Lapidus A."/>
            <person name="Barry K."/>
            <person name="Detter J.C."/>
            <person name="Glavina del Rio T."/>
            <person name="Hammon N."/>
            <person name="Israni S."/>
            <person name="Dalin E."/>
            <person name="Tice H."/>
            <person name="Pitluck S."/>
            <person name="Brettin T."/>
            <person name="Bruce D."/>
            <person name="Han C."/>
            <person name="Tapia R."/>
            <person name="Saunders E."/>
            <person name="Gilna P."/>
            <person name="Schmutz J."/>
            <person name="Larimer F."/>
            <person name="Land M."/>
            <person name="Hauser L."/>
            <person name="Kyrpides N."/>
            <person name="Kim E."/>
            <person name="Daly M.J."/>
            <person name="Fredrickson J.K."/>
            <person name="Makarova K.S."/>
            <person name="Gaidamakova E.K."/>
            <person name="Zhai M."/>
            <person name="Richardson P."/>
        </authorList>
    </citation>
    <scope>NUCLEOTIDE SEQUENCE [LARGE SCALE GENOMIC DNA]</scope>
    <source>
        <strain>DSM 11300 / CIP 105573 / AG-3a</strain>
    </source>
</reference>
<evidence type="ECO:0000255" key="1">
    <source>
        <dbReference type="HAMAP-Rule" id="MF_01326"/>
    </source>
</evidence>
<evidence type="ECO:0000305" key="2"/>
<comment type="function">
    <text evidence="1">One of two assembly initiator proteins, it binds directly to the 5'-end of the 23S rRNA, where it nucleates assembly of the 50S subunit.</text>
</comment>
<comment type="function">
    <text evidence="1">One of the proteins that surrounds the polypeptide exit tunnel on the outside of the subunit.</text>
</comment>
<comment type="subunit">
    <text evidence="1">Part of the 50S ribosomal subunit.</text>
</comment>
<comment type="similarity">
    <text evidence="1">Belongs to the universal ribosomal protein uL24 family.</text>
</comment>
<protein>
    <recommendedName>
        <fullName evidence="1">Large ribosomal subunit protein uL24</fullName>
    </recommendedName>
    <alternativeName>
        <fullName evidence="2">50S ribosomal protein L24</fullName>
    </alternativeName>
</protein>
<keyword id="KW-0687">Ribonucleoprotein</keyword>
<keyword id="KW-0689">Ribosomal protein</keyword>
<keyword id="KW-0694">RNA-binding</keyword>
<keyword id="KW-0699">rRNA-binding</keyword>
<gene>
    <name evidence="1" type="primary">rplX</name>
    <name type="ordered locus">Dgeo_1856</name>
</gene>
<proteinExistence type="inferred from homology"/>
<sequence length="115" mass="12222">MPRPSAGSHHNDKLHVKKGDTVIVLRGKHKGQTGKVLLALPRDAKVVVEGVNLVTKHVKPSAANPQGGIEQREAALHASKVALVDPETGKPTRVRKAIVDGKKVRVAVKSGKVID</sequence>
<organism>
    <name type="scientific">Deinococcus geothermalis (strain DSM 11300 / CIP 105573 / AG-3a)</name>
    <dbReference type="NCBI Taxonomy" id="319795"/>
    <lineage>
        <taxon>Bacteria</taxon>
        <taxon>Thermotogati</taxon>
        <taxon>Deinococcota</taxon>
        <taxon>Deinococci</taxon>
        <taxon>Deinococcales</taxon>
        <taxon>Deinococcaceae</taxon>
        <taxon>Deinococcus</taxon>
    </lineage>
</organism>
<name>RL24_DEIGD</name>
<accession>Q1IX83</accession>